<sequence length="177" mass="19808">EDLANVSAPQVVVFDPSEAEINKTQKATLVCLAKDFYPDHVELSWWVNGKEVHNGVSTDPQPYKQDPKSDHSKYCLSSRLRVSAAFWHNPRNHFRCQVQFFGLTDDDEWTYNSSKPITQNISAHTRGRADCGISSASYQQGVLSATVLYEILLGKATLYAVLVSALVLMAMVKRKDS</sequence>
<dbReference type="PIR" id="A94052">
    <property type="entry name" value="RWRBB"/>
</dbReference>
<dbReference type="SMR" id="P06333"/>
<dbReference type="FunCoup" id="P06333">
    <property type="interactions" value="46"/>
</dbReference>
<dbReference type="STRING" id="9986.ENSOCUP00000030695"/>
<dbReference type="PaxDb" id="9986-ENSOCUP00000021471"/>
<dbReference type="eggNOG" id="ENOG502S3FK">
    <property type="taxonomic scope" value="Eukaryota"/>
</dbReference>
<dbReference type="InParanoid" id="P06333"/>
<dbReference type="Proteomes" id="UP000001811">
    <property type="component" value="Unplaced"/>
</dbReference>
<dbReference type="GO" id="GO:0016020">
    <property type="term" value="C:membrane"/>
    <property type="evidence" value="ECO:0007669"/>
    <property type="project" value="UniProtKB-SubCell"/>
</dbReference>
<dbReference type="CDD" id="cd05769">
    <property type="entry name" value="IgC1_TCR_beta"/>
    <property type="match status" value="1"/>
</dbReference>
<dbReference type="FunFam" id="2.60.40.10:FF:001090">
    <property type="entry name" value="T cell receptor beta constant 1"/>
    <property type="match status" value="1"/>
</dbReference>
<dbReference type="Gene3D" id="2.60.40.10">
    <property type="entry name" value="Immunoglobulins"/>
    <property type="match status" value="1"/>
</dbReference>
<dbReference type="InterPro" id="IPR007110">
    <property type="entry name" value="Ig-like_dom"/>
</dbReference>
<dbReference type="InterPro" id="IPR036179">
    <property type="entry name" value="Ig-like_dom_sf"/>
</dbReference>
<dbReference type="InterPro" id="IPR013783">
    <property type="entry name" value="Ig-like_fold"/>
</dbReference>
<dbReference type="InterPro" id="IPR003597">
    <property type="entry name" value="Ig_C1-set"/>
</dbReference>
<dbReference type="InterPro" id="IPR050380">
    <property type="entry name" value="Immune_Resp_Modulators"/>
</dbReference>
<dbReference type="PANTHER" id="PTHR23411">
    <property type="entry name" value="TAPASIN"/>
    <property type="match status" value="1"/>
</dbReference>
<dbReference type="Pfam" id="PF07654">
    <property type="entry name" value="C1-set"/>
    <property type="match status" value="1"/>
</dbReference>
<dbReference type="SMART" id="SM00407">
    <property type="entry name" value="IGc1"/>
    <property type="match status" value="1"/>
</dbReference>
<dbReference type="SUPFAM" id="SSF48726">
    <property type="entry name" value="Immunoglobulin"/>
    <property type="match status" value="1"/>
</dbReference>
<dbReference type="PROSITE" id="PS50835">
    <property type="entry name" value="IG_LIKE"/>
    <property type="match status" value="1"/>
</dbReference>
<proteinExistence type="evidence at transcript level"/>
<reference key="1">
    <citation type="journal article" date="1985" name="Proc. Natl. Acad. Sci. U.S.A.">
        <title>Identification of genes for the constant region of rabbit T-cell receptor beta chains.</title>
        <authorList>
            <person name="Angiolillo A.L."/>
            <person name="Lamoyi E."/>
            <person name="Bernstein K.E."/>
            <person name="Mage R.G."/>
        </authorList>
    </citation>
    <scope>NUCLEOTIDE SEQUENCE [MRNA]</scope>
</reference>
<organism>
    <name type="scientific">Oryctolagus cuniculus</name>
    <name type="common">Rabbit</name>
    <dbReference type="NCBI Taxonomy" id="9986"/>
    <lineage>
        <taxon>Eukaryota</taxon>
        <taxon>Metazoa</taxon>
        <taxon>Chordata</taxon>
        <taxon>Craniata</taxon>
        <taxon>Vertebrata</taxon>
        <taxon>Euteleostomi</taxon>
        <taxon>Mammalia</taxon>
        <taxon>Eutheria</taxon>
        <taxon>Euarchontoglires</taxon>
        <taxon>Glires</taxon>
        <taxon>Lagomorpha</taxon>
        <taxon>Leporidae</taxon>
        <taxon>Oryctolagus</taxon>
    </lineage>
</organism>
<accession>P06333</accession>
<comment type="subcellular location">
    <subcellularLocation>
        <location evidence="3">Membrane</location>
        <topology evidence="3">Single-pass membrane protein</topology>
    </subcellularLocation>
</comment>
<keyword id="KW-1015">Disulfide bond</keyword>
<keyword id="KW-0325">Glycoprotein</keyword>
<keyword id="KW-0393">Immunoglobulin domain</keyword>
<keyword id="KW-0472">Membrane</keyword>
<keyword id="KW-0675">Receptor</keyword>
<keyword id="KW-1185">Reference proteome</keyword>
<keyword id="KW-0812">Transmembrane</keyword>
<keyword id="KW-1133">Transmembrane helix</keyword>
<protein>
    <recommendedName>
        <fullName>T-cell receptor beta chain C region</fullName>
    </recommendedName>
</protein>
<evidence type="ECO:0000255" key="1"/>
<evidence type="ECO:0000255" key="2">
    <source>
        <dbReference type="PROSITE-ProRule" id="PRU00114"/>
    </source>
</evidence>
<evidence type="ECO:0000305" key="3"/>
<name>TCB1_RABIT</name>
<feature type="chain" id="PRO_0000184529" description="T-cell receptor beta chain C region">
    <location>
        <begin position="1" status="less than"/>
        <end position="177"/>
    </location>
</feature>
<feature type="transmembrane region" description="Helical" evidence="1">
    <location>
        <begin position="146"/>
        <end position="168"/>
    </location>
</feature>
<feature type="topological domain" description="Cytoplasmic" evidence="1">
    <location>
        <begin position="169"/>
        <end position="177"/>
    </location>
</feature>
<feature type="region of interest" description="C region">
    <location>
        <begin position="1"/>
        <end position="150"/>
    </location>
</feature>
<feature type="glycosylation site" description="N-linked (GlcNAc...) asparagine" evidence="1">
    <location>
        <position position="5"/>
    </location>
</feature>
<feature type="glycosylation site" description="N-linked (GlcNAc...) asparagine" evidence="1">
    <location>
        <position position="22"/>
    </location>
</feature>
<feature type="disulfide bond" evidence="2">
    <location>
        <begin position="31"/>
        <end position="96"/>
    </location>
</feature>
<feature type="non-terminal residue">
    <location>
        <position position="1"/>
    </location>
</feature>